<keyword id="KW-0121">Carboxypeptidase</keyword>
<keyword id="KW-1015">Disulfide bond</keyword>
<keyword id="KW-0325">Glycoprotein</keyword>
<keyword id="KW-0378">Hydrolase</keyword>
<keyword id="KW-0645">Protease</keyword>
<keyword id="KW-1185">Reference proteome</keyword>
<keyword id="KW-0732">Signal</keyword>
<keyword id="KW-0926">Vacuole</keyword>
<keyword id="KW-0865">Zymogen</keyword>
<evidence type="ECO:0000250" key="1"/>
<evidence type="ECO:0000255" key="2"/>
<evidence type="ECO:0000255" key="3">
    <source>
        <dbReference type="PROSITE-ProRule" id="PRU10074"/>
    </source>
</evidence>
<evidence type="ECO:0000305" key="4"/>
<protein>
    <recommendedName>
        <fullName>Carboxypeptidase Y homolog A</fullName>
        <ecNumber>3.4.16.5</ecNumber>
    </recommendedName>
</protein>
<accession>B6QAN5</accession>
<proteinExistence type="inferred from homology"/>
<feature type="signal peptide" evidence="2">
    <location>
        <begin position="1"/>
        <end position="17"/>
    </location>
</feature>
<feature type="propeptide" id="PRO_0000407468" evidence="1">
    <location>
        <begin position="18"/>
        <end position="136"/>
    </location>
</feature>
<feature type="chain" id="PRO_0000407469" description="Carboxypeptidase Y homolog A">
    <location>
        <begin position="137"/>
        <end position="555"/>
    </location>
</feature>
<feature type="active site" evidence="3">
    <location>
        <position position="278"/>
    </location>
</feature>
<feature type="active site" evidence="3">
    <location>
        <position position="469"/>
    </location>
</feature>
<feature type="active site" evidence="3">
    <location>
        <position position="531"/>
    </location>
</feature>
<feature type="glycosylation site" description="N-linked (GlcNAc...) asparagine" evidence="2">
    <location>
        <position position="222"/>
    </location>
</feature>
<feature type="glycosylation site" description="N-linked (GlcNAc...) asparagine" evidence="2">
    <location>
        <position position="520"/>
    </location>
</feature>
<feature type="disulfide bond" evidence="1">
    <location>
        <begin position="191"/>
        <end position="430"/>
    </location>
</feature>
<feature type="disulfide bond" evidence="1">
    <location>
        <begin position="325"/>
        <end position="339"/>
    </location>
</feature>
<feature type="disulfide bond" evidence="1">
    <location>
        <begin position="349"/>
        <end position="372"/>
    </location>
</feature>
<feature type="disulfide bond" evidence="1">
    <location>
        <begin position="356"/>
        <end position="365"/>
    </location>
</feature>
<feature type="disulfide bond" evidence="1">
    <location>
        <begin position="394"/>
        <end position="400"/>
    </location>
</feature>
<organism>
    <name type="scientific">Talaromyces marneffei (strain ATCC 18224 / CBS 334.59 / QM 7333)</name>
    <name type="common">Penicillium marneffei</name>
    <dbReference type="NCBI Taxonomy" id="441960"/>
    <lineage>
        <taxon>Eukaryota</taxon>
        <taxon>Fungi</taxon>
        <taxon>Dikarya</taxon>
        <taxon>Ascomycota</taxon>
        <taxon>Pezizomycotina</taxon>
        <taxon>Eurotiomycetes</taxon>
        <taxon>Eurotiomycetidae</taxon>
        <taxon>Eurotiales</taxon>
        <taxon>Trichocomaceae</taxon>
        <taxon>Talaromyces</taxon>
        <taxon>Talaromyces sect. Talaromyces</taxon>
    </lineage>
</organism>
<name>CBPYA_TALMQ</name>
<sequence length="555" mass="61987">MRGLATTLLIGAAAAATYPAQQVLKAPEEVLEKTHKTSSSSLAETLARPLHELNEELKSLTAEAEEVWEQVSNMFPGALDNIPFFSSPKKHTRRPDSHWDHIVRGADVQNIWVENENGEKEREVGGRLETFDLRVKAVDPSSLGIDPDVKQYSGYLDDNENDKHLFYWFFESRNDPKNDPVVLWLNGGPGCSSLTGLFFELGPSSIGKNIKPIYNPYSWNSNASVIFLDQPVNVGFSYSGNSVSETSAAAKDVYALLTLFFKQFPEYATQDFHIAGESYAGHYIPSFASEILSHKKRNINLKSVLIGNGLTDGFTQYEYYRPMACGDGGYPAVLDESACRSMDNALGRCQSMIQSCYDSESAWTCVPASIYCNNALLGPYQRTGQNVYDIRKPCEGSSLCYADLEYISTYLNQAEVLKAVGAEVDSFDSCNFDINRNFLFKGDWMKPFHKLVPGILEEIPVLIYAGDADFICNWLGNKAWSDALEWSGHEEYAATELEDLEIVDNEHKGKKIGQVKSSGNLTFMRLFGGGHMVPYDQPEASLEFFNRWIGGEWTK</sequence>
<gene>
    <name type="primary">cpyA</name>
    <name type="ORF">PMAA_064090</name>
</gene>
<comment type="function">
    <text evidence="1">Vacuolar carboxypeptidase involved in degradation of small peptides. Digests preferentially peptides containing an aliphatic or hydrophobic residue in P1' position, as well as methionine, leucine or phenylalanine in P1 position of ester substrate (By similarity).</text>
</comment>
<comment type="catalytic activity">
    <reaction evidence="3">
        <text>Release of a C-terminal amino acid with broad specificity.</text>
        <dbReference type="EC" id="3.4.16.5"/>
    </reaction>
</comment>
<comment type="subcellular location">
    <subcellularLocation>
        <location evidence="1">Vacuole</location>
    </subcellularLocation>
</comment>
<comment type="similarity">
    <text evidence="4">Belongs to the peptidase S10 family.</text>
</comment>
<dbReference type="EC" id="3.4.16.5"/>
<dbReference type="EMBL" id="DS995900">
    <property type="protein sequence ID" value="EEA25293.1"/>
    <property type="molecule type" value="Genomic_DNA"/>
</dbReference>
<dbReference type="RefSeq" id="XP_002145840.1">
    <property type="nucleotide sequence ID" value="XM_002145804.1"/>
</dbReference>
<dbReference type="SMR" id="B6QAN5"/>
<dbReference type="STRING" id="441960.B6QAN5"/>
<dbReference type="ESTHER" id="penmq-cbpya">
    <property type="family name" value="Carboxypeptidase_S10"/>
</dbReference>
<dbReference type="MEROPS" id="S10.001"/>
<dbReference type="GlyCosmos" id="B6QAN5">
    <property type="glycosylation" value="2 sites, No reported glycans"/>
</dbReference>
<dbReference type="VEuPathDB" id="FungiDB:PMAA_064090"/>
<dbReference type="HOGENOM" id="CLU_008523_10_4_1"/>
<dbReference type="OrthoDB" id="499at28568"/>
<dbReference type="PhylomeDB" id="B6QAN5"/>
<dbReference type="Proteomes" id="UP000001294">
    <property type="component" value="Unassembled WGS sequence"/>
</dbReference>
<dbReference type="GO" id="GO:0000324">
    <property type="term" value="C:fungal-type vacuole"/>
    <property type="evidence" value="ECO:0007669"/>
    <property type="project" value="TreeGrafter"/>
</dbReference>
<dbReference type="GO" id="GO:0004185">
    <property type="term" value="F:serine-type carboxypeptidase activity"/>
    <property type="evidence" value="ECO:0007669"/>
    <property type="project" value="UniProtKB-EC"/>
</dbReference>
<dbReference type="GO" id="GO:0006508">
    <property type="term" value="P:proteolysis"/>
    <property type="evidence" value="ECO:0007669"/>
    <property type="project" value="UniProtKB-KW"/>
</dbReference>
<dbReference type="FunFam" id="1.10.287.410:FF:000001">
    <property type="entry name" value="Carboxypeptidase Y"/>
    <property type="match status" value="1"/>
</dbReference>
<dbReference type="Gene3D" id="1.10.287.410">
    <property type="match status" value="1"/>
</dbReference>
<dbReference type="Gene3D" id="3.40.50.1820">
    <property type="entry name" value="alpha/beta hydrolase"/>
    <property type="match status" value="1"/>
</dbReference>
<dbReference type="InterPro" id="IPR029058">
    <property type="entry name" value="AB_hydrolase_fold"/>
</dbReference>
<dbReference type="InterPro" id="IPR001563">
    <property type="entry name" value="Peptidase_S10"/>
</dbReference>
<dbReference type="InterPro" id="IPR008442">
    <property type="entry name" value="Propeptide_carboxypepY"/>
</dbReference>
<dbReference type="InterPro" id="IPR018202">
    <property type="entry name" value="Ser_caboxypep_ser_AS"/>
</dbReference>
<dbReference type="PANTHER" id="PTHR11802:SF113">
    <property type="entry name" value="SERINE CARBOXYPEPTIDASE CTSA-4.1"/>
    <property type="match status" value="1"/>
</dbReference>
<dbReference type="PANTHER" id="PTHR11802">
    <property type="entry name" value="SERINE PROTEASE FAMILY S10 SERINE CARBOXYPEPTIDASE"/>
    <property type="match status" value="1"/>
</dbReference>
<dbReference type="Pfam" id="PF05388">
    <property type="entry name" value="Carbpep_Y_N"/>
    <property type="match status" value="1"/>
</dbReference>
<dbReference type="Pfam" id="PF00450">
    <property type="entry name" value="Peptidase_S10"/>
    <property type="match status" value="1"/>
</dbReference>
<dbReference type="PRINTS" id="PR00724">
    <property type="entry name" value="CRBOXYPTASEC"/>
</dbReference>
<dbReference type="SUPFAM" id="SSF53474">
    <property type="entry name" value="alpha/beta-Hydrolases"/>
    <property type="match status" value="1"/>
</dbReference>
<dbReference type="PROSITE" id="PS00131">
    <property type="entry name" value="CARBOXYPEPT_SER_SER"/>
    <property type="match status" value="1"/>
</dbReference>
<reference key="1">
    <citation type="journal article" date="2015" name="Genome Announc.">
        <title>Genome sequence of the AIDS-associated pathogen Penicillium marneffei (ATCC18224) and its near taxonomic relative Talaromyces stipitatus (ATCC10500).</title>
        <authorList>
            <person name="Nierman W.C."/>
            <person name="Fedorova-Abrams N.D."/>
            <person name="Andrianopoulos A."/>
        </authorList>
    </citation>
    <scope>NUCLEOTIDE SEQUENCE [LARGE SCALE GENOMIC DNA]</scope>
    <source>
        <strain>ATCC 18224 / CBS 334.59 / QM 7333</strain>
    </source>
</reference>